<comment type="function">
    <text evidence="1">Phosphoribosylformylglycinamidine synthase involved in the purines biosynthetic pathway. Catalyzes the ATP-dependent conversion of formylglycinamide ribonucleotide (FGAR) and glutamine to yield formylglycinamidine ribonucleotide (FGAM) and glutamate.</text>
</comment>
<comment type="catalytic activity">
    <reaction evidence="1">
        <text>N(2)-formyl-N(1)-(5-phospho-beta-D-ribosyl)glycinamide + L-glutamine + ATP + H2O = 2-formamido-N(1)-(5-O-phospho-beta-D-ribosyl)acetamidine + L-glutamate + ADP + phosphate + H(+)</text>
        <dbReference type="Rhea" id="RHEA:17129"/>
        <dbReference type="ChEBI" id="CHEBI:15377"/>
        <dbReference type="ChEBI" id="CHEBI:15378"/>
        <dbReference type="ChEBI" id="CHEBI:29985"/>
        <dbReference type="ChEBI" id="CHEBI:30616"/>
        <dbReference type="ChEBI" id="CHEBI:43474"/>
        <dbReference type="ChEBI" id="CHEBI:58359"/>
        <dbReference type="ChEBI" id="CHEBI:147286"/>
        <dbReference type="ChEBI" id="CHEBI:147287"/>
        <dbReference type="ChEBI" id="CHEBI:456216"/>
        <dbReference type="EC" id="6.3.5.3"/>
    </reaction>
</comment>
<comment type="pathway">
    <text evidence="1">Purine metabolism; IMP biosynthesis via de novo pathway; 5-amino-1-(5-phospho-D-ribosyl)imidazole from N(2)-formyl-N(1)-(5-phospho-D-ribosyl)glycinamide: step 1/2.</text>
</comment>
<comment type="subunit">
    <text evidence="1">Monomer.</text>
</comment>
<comment type="subcellular location">
    <subcellularLocation>
        <location evidence="1">Cytoplasm</location>
    </subcellularLocation>
</comment>
<comment type="similarity">
    <text evidence="1">In the N-terminal section; belongs to the FGAMS family.</text>
</comment>
<proteinExistence type="inferred from homology"/>
<accession>Q0TET1</accession>
<feature type="chain" id="PRO_0000264574" description="Phosphoribosylformylglycinamidine synthase">
    <location>
        <begin position="1"/>
        <end position="1295"/>
    </location>
</feature>
<feature type="domain" description="Glutamine amidotransferase type-1" evidence="1">
    <location>
        <begin position="1042"/>
        <end position="1295"/>
    </location>
</feature>
<feature type="region of interest" description="Disordered" evidence="2">
    <location>
        <begin position="305"/>
        <end position="327"/>
    </location>
</feature>
<feature type="active site" description="Nucleophile" evidence="1">
    <location>
        <position position="1135"/>
    </location>
</feature>
<feature type="active site" evidence="1">
    <location>
        <position position="1260"/>
    </location>
</feature>
<feature type="active site" evidence="1">
    <location>
        <position position="1262"/>
    </location>
</feature>
<feature type="binding site" evidence="1">
    <location>
        <begin position="307"/>
        <end position="318"/>
    </location>
    <ligand>
        <name>ATP</name>
        <dbReference type="ChEBI" id="CHEBI:30616"/>
    </ligand>
</feature>
<feature type="binding site" evidence="1">
    <location>
        <position position="678"/>
    </location>
    <ligand>
        <name>ATP</name>
        <dbReference type="ChEBI" id="CHEBI:30616"/>
    </ligand>
</feature>
<feature type="binding site" evidence="1">
    <location>
        <position position="718"/>
    </location>
    <ligand>
        <name>Mg(2+)</name>
        <dbReference type="ChEBI" id="CHEBI:18420"/>
    </ligand>
</feature>
<feature type="binding site" evidence="1">
    <location>
        <position position="722"/>
    </location>
    <ligand>
        <name>Mg(2+)</name>
        <dbReference type="ChEBI" id="CHEBI:18420"/>
    </ligand>
</feature>
<feature type="binding site" evidence="1">
    <location>
        <position position="884"/>
    </location>
    <ligand>
        <name>Mg(2+)</name>
        <dbReference type="ChEBI" id="CHEBI:18420"/>
    </ligand>
</feature>
<feature type="binding site" evidence="1">
    <location>
        <position position="886"/>
    </location>
    <ligand>
        <name>ATP</name>
        <dbReference type="ChEBI" id="CHEBI:30616"/>
    </ligand>
</feature>
<name>PUR4_ECOL5</name>
<protein>
    <recommendedName>
        <fullName evidence="1">Phosphoribosylformylglycinamidine synthase</fullName>
        <shortName evidence="1">FGAM synthase</shortName>
        <shortName evidence="1">FGAMS</shortName>
        <ecNumber evidence="1">6.3.5.3</ecNumber>
    </recommendedName>
    <alternativeName>
        <fullName evidence="1">Formylglycinamide ribonucleotide amidotransferase</fullName>
        <shortName evidence="1">FGAR amidotransferase</shortName>
        <shortName evidence="1">FGAR-AT</shortName>
    </alternativeName>
</protein>
<organism>
    <name type="scientific">Escherichia coli O6:K15:H31 (strain 536 / UPEC)</name>
    <dbReference type="NCBI Taxonomy" id="362663"/>
    <lineage>
        <taxon>Bacteria</taxon>
        <taxon>Pseudomonadati</taxon>
        <taxon>Pseudomonadota</taxon>
        <taxon>Gammaproteobacteria</taxon>
        <taxon>Enterobacterales</taxon>
        <taxon>Enterobacteriaceae</taxon>
        <taxon>Escherichia</taxon>
    </lineage>
</organism>
<keyword id="KW-0067">ATP-binding</keyword>
<keyword id="KW-0963">Cytoplasm</keyword>
<keyword id="KW-0315">Glutamine amidotransferase</keyword>
<keyword id="KW-0436">Ligase</keyword>
<keyword id="KW-0460">Magnesium</keyword>
<keyword id="KW-0479">Metal-binding</keyword>
<keyword id="KW-0547">Nucleotide-binding</keyword>
<keyword id="KW-0658">Purine biosynthesis</keyword>
<sequence length="1295" mass="141176">MMEILRGSPALSAFRINKLLARFQAARLPVHTIYAEYVHFADLNAPLNDDEHAQLERLLKYGPALASHAPQGKLLLVTPRPGTISPWSSKATDIAHNCGLQQVNRLERGVAYYIEAGTLTNEQWQQVTAELHDRMMETVFFALDDAEQLFAHHQPTPVTSVDLLGQGRQALIDANLRLGLALAEDEIDYLQDAFTKLGRNPNDIELYMFAQANSEHCRHKIFNADWVIDGEQQPKSLFKMIKNTFETTPDHVLSAYKDNAAVMEGSEVGRYFADHETGRYDFHQEPAHILMKVETHNHPTAISPWPGAATGSGGEIRDEGATGRGAKPKAGLVGFSVSNLRIPGFEQPWEEDFGKPERIVTALDIMTEGPLGGAAFNNEFGRPALNGYFRTYEEKVNSHNGEELRGYHKPIMLAGGIGNIRADHVQKGEINVGAKLVVLGGPAMNIGLGGGAASSMASGQSDADLDFASVQRDNPEMERRCQEVIDRCWQLGDANPILFIHDVGAGGLSNAMPELVSDGGRGGKFELRDILSDEPGMSPLEIWCNESQERYVLAVAADQLPLFDELCKRERAPYAVIGEATEELHLSLHDRHFDNQPIDLPLDVLLGKTPKMTRDVQTLKAKGDALAREGITIADAVKRVLHLPTVAEKTFLVTIGDRSVTGMVARDQMVGPWQVPVANCAVTTASLDSYYGEAMAIGERAPVALLDFAASARLAVGEALTNIAATQIGDIKRIKLSANWMAAAGHPGEDAGLYEAVKAVGEELCPALGLTIPVGKDSMSMKTRWQEGNEECEMTSPLSLVISAFARVEDVRHTITPQLSTEDNALLLIDLGKGNNALGATALAQVYRQLGDKPADVRDVAQLKGFYDAIQALVAQRKLLAYHDRSDGGLLVTLAEMAFAGHCGIDADIATLGDDRLAALFSEELGAVIQVRAADREAVEAVLAQHGLADCVHYVGQAVSGDRFVITANGQTVFSESRTTLRVWWAETTWQMQRLRDNPECADQEHQAKSNDADPGLNVKLSFDINEDVAAPFIATGARPKVAVLREQGVNSHVEMAAAFHRAGFDAIDVHMSDLLAGRTGLEGFHALVACGGFSYGDVLGAGEGWAKSILFNDRVRDEFATFFHRPQTLALGVCNGCQMMSNLRELIPGSELWPRFVRNTSDRFEARFSLVEVTQSPSLLLQGMVGSQMPIAVSHGEGRVEVRDAAHLAALESKGLVALRYVDNFGKVTETYPANPNGSPNGITAVTTESGRVTIMMPHPERVFRTVSNSWHPENWGEDGPWMRIFRNARKQLG</sequence>
<evidence type="ECO:0000255" key="1">
    <source>
        <dbReference type="HAMAP-Rule" id="MF_00419"/>
    </source>
</evidence>
<evidence type="ECO:0000256" key="2">
    <source>
        <dbReference type="SAM" id="MobiDB-lite"/>
    </source>
</evidence>
<gene>
    <name evidence="1" type="primary">purL</name>
    <name type="ordered locus">ECP_2559</name>
</gene>
<reference key="1">
    <citation type="journal article" date="2006" name="Mol. Microbiol.">
        <title>Role of pathogenicity island-associated integrases in the genome plasticity of uropathogenic Escherichia coli strain 536.</title>
        <authorList>
            <person name="Hochhut B."/>
            <person name="Wilde C."/>
            <person name="Balling G."/>
            <person name="Middendorf B."/>
            <person name="Dobrindt U."/>
            <person name="Brzuszkiewicz E."/>
            <person name="Gottschalk G."/>
            <person name="Carniel E."/>
            <person name="Hacker J."/>
        </authorList>
    </citation>
    <scope>NUCLEOTIDE SEQUENCE [LARGE SCALE GENOMIC DNA]</scope>
    <source>
        <strain>536 / UPEC</strain>
    </source>
</reference>
<dbReference type="EC" id="6.3.5.3" evidence="1"/>
<dbReference type="EMBL" id="CP000247">
    <property type="protein sequence ID" value="ABG70548.1"/>
    <property type="molecule type" value="Genomic_DNA"/>
</dbReference>
<dbReference type="RefSeq" id="WP_001298398.1">
    <property type="nucleotide sequence ID" value="NC_008253.1"/>
</dbReference>
<dbReference type="SMR" id="Q0TET1"/>
<dbReference type="MEROPS" id="C56.972"/>
<dbReference type="KEGG" id="ecp:ECP_2559"/>
<dbReference type="HOGENOM" id="CLU_001031_0_2_6"/>
<dbReference type="UniPathway" id="UPA00074">
    <property type="reaction ID" value="UER00128"/>
</dbReference>
<dbReference type="Proteomes" id="UP000009182">
    <property type="component" value="Chromosome"/>
</dbReference>
<dbReference type="GO" id="GO:0005737">
    <property type="term" value="C:cytoplasm"/>
    <property type="evidence" value="ECO:0007669"/>
    <property type="project" value="UniProtKB-SubCell"/>
</dbReference>
<dbReference type="GO" id="GO:0005524">
    <property type="term" value="F:ATP binding"/>
    <property type="evidence" value="ECO:0007669"/>
    <property type="project" value="UniProtKB-UniRule"/>
</dbReference>
<dbReference type="GO" id="GO:0046872">
    <property type="term" value="F:metal ion binding"/>
    <property type="evidence" value="ECO:0007669"/>
    <property type="project" value="UniProtKB-KW"/>
</dbReference>
<dbReference type="GO" id="GO:0004642">
    <property type="term" value="F:phosphoribosylformylglycinamidine synthase activity"/>
    <property type="evidence" value="ECO:0007669"/>
    <property type="project" value="UniProtKB-UniRule"/>
</dbReference>
<dbReference type="GO" id="GO:0006189">
    <property type="term" value="P:'de novo' IMP biosynthetic process"/>
    <property type="evidence" value="ECO:0007669"/>
    <property type="project" value="UniProtKB-UniRule"/>
</dbReference>
<dbReference type="CDD" id="cd01740">
    <property type="entry name" value="GATase1_FGAR_AT"/>
    <property type="match status" value="1"/>
</dbReference>
<dbReference type="CDD" id="cd02203">
    <property type="entry name" value="PurL_repeat1"/>
    <property type="match status" value="1"/>
</dbReference>
<dbReference type="FunFam" id="1.10.8.750:FF:000002">
    <property type="entry name" value="Phosphoribosylformylglycinamidine synthase"/>
    <property type="match status" value="1"/>
</dbReference>
<dbReference type="FunFam" id="3.30.1330.10:FF:000002">
    <property type="entry name" value="Phosphoribosylformylglycinamidine synthase"/>
    <property type="match status" value="1"/>
</dbReference>
<dbReference type="FunFam" id="3.30.1330.10:FF:000005">
    <property type="entry name" value="Phosphoribosylformylglycinamidine synthase"/>
    <property type="match status" value="1"/>
</dbReference>
<dbReference type="FunFam" id="3.40.50.880:FF:000008">
    <property type="entry name" value="Phosphoribosylformylglycinamidine synthase"/>
    <property type="match status" value="1"/>
</dbReference>
<dbReference type="FunFam" id="3.90.650.10:FF:000002">
    <property type="entry name" value="Phosphoribosylformylglycinamidine synthase"/>
    <property type="match status" value="1"/>
</dbReference>
<dbReference type="FunFam" id="3.90.650.10:FF:000005">
    <property type="entry name" value="Phosphoribosylformylglycinamidine synthase"/>
    <property type="match status" value="1"/>
</dbReference>
<dbReference type="Gene3D" id="3.40.50.880">
    <property type="match status" value="1"/>
</dbReference>
<dbReference type="Gene3D" id="1.10.8.750">
    <property type="entry name" value="Phosphoribosylformylglycinamidine synthase, linker domain"/>
    <property type="match status" value="1"/>
</dbReference>
<dbReference type="Gene3D" id="3.90.650.10">
    <property type="entry name" value="PurM-like C-terminal domain"/>
    <property type="match status" value="2"/>
</dbReference>
<dbReference type="Gene3D" id="3.30.1330.10">
    <property type="entry name" value="PurM-like, N-terminal domain"/>
    <property type="match status" value="2"/>
</dbReference>
<dbReference type="HAMAP" id="MF_00419">
    <property type="entry name" value="PurL_1"/>
    <property type="match status" value="1"/>
</dbReference>
<dbReference type="InterPro" id="IPR029062">
    <property type="entry name" value="Class_I_gatase-like"/>
</dbReference>
<dbReference type="InterPro" id="IPR040707">
    <property type="entry name" value="FGAR-AT_N"/>
</dbReference>
<dbReference type="InterPro" id="IPR055181">
    <property type="entry name" value="FGAR-AT_PurM_N-like"/>
</dbReference>
<dbReference type="InterPro" id="IPR010073">
    <property type="entry name" value="PurL_large"/>
</dbReference>
<dbReference type="InterPro" id="IPR041609">
    <property type="entry name" value="PurL_linker"/>
</dbReference>
<dbReference type="InterPro" id="IPR010918">
    <property type="entry name" value="PurM-like_C_dom"/>
</dbReference>
<dbReference type="InterPro" id="IPR036676">
    <property type="entry name" value="PurM-like_C_sf"/>
</dbReference>
<dbReference type="InterPro" id="IPR036921">
    <property type="entry name" value="PurM-like_N_sf"/>
</dbReference>
<dbReference type="InterPro" id="IPR036604">
    <property type="entry name" value="PurS-like_sf"/>
</dbReference>
<dbReference type="NCBIfam" id="TIGR01735">
    <property type="entry name" value="FGAM_synt"/>
    <property type="match status" value="1"/>
</dbReference>
<dbReference type="NCBIfam" id="NF003672">
    <property type="entry name" value="PRK05297.1"/>
    <property type="match status" value="1"/>
</dbReference>
<dbReference type="PANTHER" id="PTHR10099">
    <property type="entry name" value="PHOSPHORIBOSYLFORMYLGLYCINAMIDINE SYNTHASE"/>
    <property type="match status" value="1"/>
</dbReference>
<dbReference type="PANTHER" id="PTHR10099:SF1">
    <property type="entry name" value="PHOSPHORIBOSYLFORMYLGLYCINAMIDINE SYNTHASE"/>
    <property type="match status" value="1"/>
</dbReference>
<dbReference type="Pfam" id="PF02769">
    <property type="entry name" value="AIRS_C"/>
    <property type="match status" value="2"/>
</dbReference>
<dbReference type="Pfam" id="PF18072">
    <property type="entry name" value="FGAR-AT_linker"/>
    <property type="match status" value="1"/>
</dbReference>
<dbReference type="Pfam" id="PF18076">
    <property type="entry name" value="FGAR-AT_N"/>
    <property type="match status" value="1"/>
</dbReference>
<dbReference type="Pfam" id="PF22689">
    <property type="entry name" value="FGAR-AT_PurM_N-like"/>
    <property type="match status" value="1"/>
</dbReference>
<dbReference type="Pfam" id="PF13507">
    <property type="entry name" value="GATase_5"/>
    <property type="match status" value="1"/>
</dbReference>
<dbReference type="SMART" id="SM01211">
    <property type="entry name" value="GATase_5"/>
    <property type="match status" value="1"/>
</dbReference>
<dbReference type="SUPFAM" id="SSF52317">
    <property type="entry name" value="Class I glutamine amidotransferase-like"/>
    <property type="match status" value="1"/>
</dbReference>
<dbReference type="SUPFAM" id="SSF109736">
    <property type="entry name" value="FGAM synthase PurL, linker domain"/>
    <property type="match status" value="1"/>
</dbReference>
<dbReference type="SUPFAM" id="SSF56042">
    <property type="entry name" value="PurM C-terminal domain-like"/>
    <property type="match status" value="2"/>
</dbReference>
<dbReference type="SUPFAM" id="SSF55326">
    <property type="entry name" value="PurM N-terminal domain-like"/>
    <property type="match status" value="2"/>
</dbReference>
<dbReference type="SUPFAM" id="SSF82697">
    <property type="entry name" value="PurS-like"/>
    <property type="match status" value="1"/>
</dbReference>
<dbReference type="PROSITE" id="PS51273">
    <property type="entry name" value="GATASE_TYPE_1"/>
    <property type="match status" value="1"/>
</dbReference>